<proteinExistence type="evidence at protein level"/>
<feature type="chain" id="PRO_1000025924" description="RNA-binding protein Hfq">
    <location>
        <begin position="1"/>
        <end position="82"/>
    </location>
</feature>
<feature type="domain" description="Sm" evidence="2">
    <location>
        <begin position="9"/>
        <end position="68"/>
    </location>
</feature>
<feature type="helix" evidence="3">
    <location>
        <begin position="8"/>
        <end position="17"/>
    </location>
</feature>
<feature type="strand" evidence="3">
    <location>
        <begin position="21"/>
        <end position="26"/>
    </location>
</feature>
<feature type="strand" evidence="3">
    <location>
        <begin position="31"/>
        <end position="39"/>
    </location>
</feature>
<feature type="strand" evidence="3">
    <location>
        <begin position="41"/>
        <end position="55"/>
    </location>
</feature>
<feature type="helix" evidence="3">
    <location>
        <begin position="56"/>
        <end position="58"/>
    </location>
</feature>
<feature type="strand" evidence="3">
    <location>
        <begin position="59"/>
        <end position="66"/>
    </location>
</feature>
<evidence type="ECO:0000255" key="1">
    <source>
        <dbReference type="HAMAP-Rule" id="MF_00436"/>
    </source>
</evidence>
<evidence type="ECO:0000255" key="2">
    <source>
        <dbReference type="PROSITE-ProRule" id="PRU01346"/>
    </source>
</evidence>
<evidence type="ECO:0007829" key="3">
    <source>
        <dbReference type="PDB" id="5I21"/>
    </source>
</evidence>
<comment type="function">
    <text evidence="1">RNA chaperone that binds small regulatory RNA (sRNAs) and mRNAs to facilitate mRNA translational regulation in response to envelope stress, environmental stress and changes in metabolite concentrations. Also binds with high specificity to tRNAs.</text>
</comment>
<comment type="subunit">
    <text evidence="1">Homohexamer.</text>
</comment>
<comment type="similarity">
    <text evidence="1">Belongs to the Hfq family.</text>
</comment>
<protein>
    <recommendedName>
        <fullName evidence="1">RNA-binding protein Hfq</fullName>
    </recommendedName>
</protein>
<dbReference type="EMBL" id="CP000744">
    <property type="protein sequence ID" value="ABR82556.1"/>
    <property type="molecule type" value="Genomic_DNA"/>
</dbReference>
<dbReference type="RefSeq" id="WP_003095657.1">
    <property type="nucleotide sequence ID" value="NC_009656.1"/>
</dbReference>
<dbReference type="PDB" id="5I21">
    <property type="method" value="X-ray"/>
    <property type="resolution" value="1.55 A"/>
    <property type="chains" value="A/B/C=1-82"/>
</dbReference>
<dbReference type="PDB" id="8BVJ">
    <property type="method" value="EM"/>
    <property type="resolution" value="4.50 A"/>
    <property type="chains" value="D/E/F/I/J/K/L/M/N/P/R/S/T/U/V/W/X/Y=1-82"/>
</dbReference>
<dbReference type="PDB" id="8BVM">
    <property type="method" value="EM"/>
    <property type="resolution" value="3.60 A"/>
    <property type="chains" value="B/C/D/E/F/G/I/J/K/L/M/O=1-82"/>
</dbReference>
<dbReference type="PDBsum" id="5I21"/>
<dbReference type="PDBsum" id="8BVJ"/>
<dbReference type="PDBsum" id="8BVM"/>
<dbReference type="EMDB" id="EMD-16265"/>
<dbReference type="EMDB" id="EMD-16266"/>
<dbReference type="SMR" id="A6VD57"/>
<dbReference type="GeneID" id="77223493"/>
<dbReference type="KEGG" id="pap:PSPA7_5673"/>
<dbReference type="HOGENOM" id="CLU_113688_2_2_6"/>
<dbReference type="Proteomes" id="UP000001582">
    <property type="component" value="Chromosome"/>
</dbReference>
<dbReference type="GO" id="GO:0005829">
    <property type="term" value="C:cytosol"/>
    <property type="evidence" value="ECO:0007669"/>
    <property type="project" value="TreeGrafter"/>
</dbReference>
<dbReference type="GO" id="GO:0003723">
    <property type="term" value="F:RNA binding"/>
    <property type="evidence" value="ECO:0007669"/>
    <property type="project" value="UniProtKB-UniRule"/>
</dbReference>
<dbReference type="GO" id="GO:0006355">
    <property type="term" value="P:regulation of DNA-templated transcription"/>
    <property type="evidence" value="ECO:0007669"/>
    <property type="project" value="InterPro"/>
</dbReference>
<dbReference type="GO" id="GO:0043487">
    <property type="term" value="P:regulation of RNA stability"/>
    <property type="evidence" value="ECO:0007669"/>
    <property type="project" value="TreeGrafter"/>
</dbReference>
<dbReference type="GO" id="GO:0045974">
    <property type="term" value="P:regulation of translation, ncRNA-mediated"/>
    <property type="evidence" value="ECO:0007669"/>
    <property type="project" value="TreeGrafter"/>
</dbReference>
<dbReference type="CDD" id="cd01716">
    <property type="entry name" value="Hfq"/>
    <property type="match status" value="1"/>
</dbReference>
<dbReference type="FunFam" id="2.30.30.100:FF:000001">
    <property type="entry name" value="RNA-binding protein Hfq"/>
    <property type="match status" value="1"/>
</dbReference>
<dbReference type="Gene3D" id="2.30.30.100">
    <property type="match status" value="1"/>
</dbReference>
<dbReference type="HAMAP" id="MF_00436">
    <property type="entry name" value="Hfq"/>
    <property type="match status" value="1"/>
</dbReference>
<dbReference type="InterPro" id="IPR005001">
    <property type="entry name" value="Hfq"/>
</dbReference>
<dbReference type="InterPro" id="IPR010920">
    <property type="entry name" value="LSM_dom_sf"/>
</dbReference>
<dbReference type="InterPro" id="IPR047575">
    <property type="entry name" value="Sm"/>
</dbReference>
<dbReference type="NCBIfam" id="TIGR02383">
    <property type="entry name" value="Hfq"/>
    <property type="match status" value="1"/>
</dbReference>
<dbReference type="NCBIfam" id="NF001602">
    <property type="entry name" value="PRK00395.1"/>
    <property type="match status" value="1"/>
</dbReference>
<dbReference type="PANTHER" id="PTHR34772">
    <property type="entry name" value="RNA-BINDING PROTEIN HFQ"/>
    <property type="match status" value="1"/>
</dbReference>
<dbReference type="PANTHER" id="PTHR34772:SF1">
    <property type="entry name" value="RNA-BINDING PROTEIN HFQ"/>
    <property type="match status" value="1"/>
</dbReference>
<dbReference type="Pfam" id="PF17209">
    <property type="entry name" value="Hfq"/>
    <property type="match status" value="1"/>
</dbReference>
<dbReference type="SUPFAM" id="SSF50182">
    <property type="entry name" value="Sm-like ribonucleoproteins"/>
    <property type="match status" value="1"/>
</dbReference>
<dbReference type="PROSITE" id="PS52002">
    <property type="entry name" value="SM"/>
    <property type="match status" value="1"/>
</dbReference>
<gene>
    <name evidence="1" type="primary">hfq</name>
    <name type="ordered locus">PSPA7_5673</name>
</gene>
<organism>
    <name type="scientific">Pseudomonas paraeruginosa (strain DSM 24068 / PA7)</name>
    <name type="common">Pseudomonas aeruginosa (strain PA7)</name>
    <dbReference type="NCBI Taxonomy" id="381754"/>
    <lineage>
        <taxon>Bacteria</taxon>
        <taxon>Pseudomonadati</taxon>
        <taxon>Pseudomonadota</taxon>
        <taxon>Gammaproteobacteria</taxon>
        <taxon>Pseudomonadales</taxon>
        <taxon>Pseudomonadaceae</taxon>
        <taxon>Pseudomonas</taxon>
        <taxon>Pseudomonas paraeruginosa</taxon>
    </lineage>
</organism>
<sequence>MSKGHSLQDPYLNTLRKERVPVSIYLVNGIKLQGQIESFDQFVILLKNTVSQMVYKHAISTVVPSRPVRLPSGDQPAEPGNA</sequence>
<reference key="1">
    <citation type="submission" date="2007-06" db="EMBL/GenBank/DDBJ databases">
        <authorList>
            <person name="Dodson R.J."/>
            <person name="Harkins D."/>
            <person name="Paulsen I.T."/>
        </authorList>
    </citation>
    <scope>NUCLEOTIDE SEQUENCE [LARGE SCALE GENOMIC DNA]</scope>
    <source>
        <strain>DSM 24068 / PA7</strain>
    </source>
</reference>
<accession>A6VD57</accession>
<keyword id="KW-0002">3D-structure</keyword>
<keyword id="KW-0694">RNA-binding</keyword>
<keyword id="KW-0346">Stress response</keyword>
<name>HFQ_PSEP7</name>